<protein>
    <recommendedName>
        <fullName evidence="1">Large ribosomal subunit protein uL2</fullName>
    </recommendedName>
    <alternativeName>
        <fullName evidence="3">50S ribosomal protein L2</fullName>
    </alternativeName>
</protein>
<feature type="chain" id="PRO_1000086327" description="Large ribosomal subunit protein uL2">
    <location>
        <begin position="1"/>
        <end position="274"/>
    </location>
</feature>
<feature type="region of interest" description="Disordered" evidence="2">
    <location>
        <begin position="1"/>
        <end position="23"/>
    </location>
</feature>
<organism>
    <name type="scientific">Dehalococcoides mccartyi (strain ATCC BAA-2100 / JCM 16839 / KCTC 5957 / BAV1)</name>
    <dbReference type="NCBI Taxonomy" id="216389"/>
    <lineage>
        <taxon>Bacteria</taxon>
        <taxon>Bacillati</taxon>
        <taxon>Chloroflexota</taxon>
        <taxon>Dehalococcoidia</taxon>
        <taxon>Dehalococcoidales</taxon>
        <taxon>Dehalococcoidaceae</taxon>
        <taxon>Dehalococcoides</taxon>
    </lineage>
</organism>
<gene>
    <name evidence="1" type="primary">rplB</name>
    <name type="ordered locus">DehaBAV1_0454</name>
</gene>
<comment type="function">
    <text evidence="1">One of the primary rRNA binding proteins. Required for association of the 30S and 50S subunits to form the 70S ribosome, for tRNA binding and peptide bond formation. It has been suggested to have peptidyltransferase activity; this is somewhat controversial. Makes several contacts with the 16S rRNA in the 70S ribosome.</text>
</comment>
<comment type="subunit">
    <text evidence="1">Part of the 50S ribosomal subunit. Forms a bridge to the 30S subunit in the 70S ribosome.</text>
</comment>
<comment type="similarity">
    <text evidence="1">Belongs to the universal ribosomal protein uL2 family.</text>
</comment>
<accession>A5FRZ2</accession>
<evidence type="ECO:0000255" key="1">
    <source>
        <dbReference type="HAMAP-Rule" id="MF_01320"/>
    </source>
</evidence>
<evidence type="ECO:0000256" key="2">
    <source>
        <dbReference type="SAM" id="MobiDB-lite"/>
    </source>
</evidence>
<evidence type="ECO:0000305" key="3"/>
<dbReference type="EMBL" id="CP000688">
    <property type="protein sequence ID" value="ABQ17039.1"/>
    <property type="molecule type" value="Genomic_DNA"/>
</dbReference>
<dbReference type="SMR" id="A5FRZ2"/>
<dbReference type="KEGG" id="deb:DehaBAV1_0454"/>
<dbReference type="PATRIC" id="fig|216389.18.peg.497"/>
<dbReference type="HOGENOM" id="CLU_036235_2_1_0"/>
<dbReference type="GO" id="GO:0015934">
    <property type="term" value="C:large ribosomal subunit"/>
    <property type="evidence" value="ECO:0007669"/>
    <property type="project" value="InterPro"/>
</dbReference>
<dbReference type="GO" id="GO:0019843">
    <property type="term" value="F:rRNA binding"/>
    <property type="evidence" value="ECO:0007669"/>
    <property type="project" value="UniProtKB-UniRule"/>
</dbReference>
<dbReference type="GO" id="GO:0003735">
    <property type="term" value="F:structural constituent of ribosome"/>
    <property type="evidence" value="ECO:0007669"/>
    <property type="project" value="InterPro"/>
</dbReference>
<dbReference type="GO" id="GO:0016740">
    <property type="term" value="F:transferase activity"/>
    <property type="evidence" value="ECO:0007669"/>
    <property type="project" value="InterPro"/>
</dbReference>
<dbReference type="GO" id="GO:0002181">
    <property type="term" value="P:cytoplasmic translation"/>
    <property type="evidence" value="ECO:0007669"/>
    <property type="project" value="TreeGrafter"/>
</dbReference>
<dbReference type="FunFam" id="2.30.30.30:FF:000001">
    <property type="entry name" value="50S ribosomal protein L2"/>
    <property type="match status" value="1"/>
</dbReference>
<dbReference type="FunFam" id="2.40.50.140:FF:000003">
    <property type="entry name" value="50S ribosomal protein L2"/>
    <property type="match status" value="1"/>
</dbReference>
<dbReference type="FunFam" id="4.10.950.10:FF:000001">
    <property type="entry name" value="50S ribosomal protein L2"/>
    <property type="match status" value="1"/>
</dbReference>
<dbReference type="Gene3D" id="2.30.30.30">
    <property type="match status" value="1"/>
</dbReference>
<dbReference type="Gene3D" id="2.40.50.140">
    <property type="entry name" value="Nucleic acid-binding proteins"/>
    <property type="match status" value="1"/>
</dbReference>
<dbReference type="Gene3D" id="4.10.950.10">
    <property type="entry name" value="Ribosomal protein L2, domain 3"/>
    <property type="match status" value="1"/>
</dbReference>
<dbReference type="HAMAP" id="MF_01320_B">
    <property type="entry name" value="Ribosomal_uL2_B"/>
    <property type="match status" value="1"/>
</dbReference>
<dbReference type="InterPro" id="IPR012340">
    <property type="entry name" value="NA-bd_OB-fold"/>
</dbReference>
<dbReference type="InterPro" id="IPR014722">
    <property type="entry name" value="Rib_uL2_dom2"/>
</dbReference>
<dbReference type="InterPro" id="IPR002171">
    <property type="entry name" value="Ribosomal_uL2"/>
</dbReference>
<dbReference type="InterPro" id="IPR005880">
    <property type="entry name" value="Ribosomal_uL2_bac/org-type"/>
</dbReference>
<dbReference type="InterPro" id="IPR022669">
    <property type="entry name" value="Ribosomal_uL2_C"/>
</dbReference>
<dbReference type="InterPro" id="IPR014726">
    <property type="entry name" value="Ribosomal_uL2_dom3"/>
</dbReference>
<dbReference type="InterPro" id="IPR022666">
    <property type="entry name" value="Ribosomal_uL2_RNA-bd_dom"/>
</dbReference>
<dbReference type="InterPro" id="IPR008991">
    <property type="entry name" value="Translation_prot_SH3-like_sf"/>
</dbReference>
<dbReference type="NCBIfam" id="TIGR01171">
    <property type="entry name" value="rplB_bact"/>
    <property type="match status" value="1"/>
</dbReference>
<dbReference type="PANTHER" id="PTHR13691:SF5">
    <property type="entry name" value="LARGE RIBOSOMAL SUBUNIT PROTEIN UL2M"/>
    <property type="match status" value="1"/>
</dbReference>
<dbReference type="PANTHER" id="PTHR13691">
    <property type="entry name" value="RIBOSOMAL PROTEIN L2"/>
    <property type="match status" value="1"/>
</dbReference>
<dbReference type="Pfam" id="PF00181">
    <property type="entry name" value="Ribosomal_L2"/>
    <property type="match status" value="1"/>
</dbReference>
<dbReference type="Pfam" id="PF03947">
    <property type="entry name" value="Ribosomal_L2_C"/>
    <property type="match status" value="1"/>
</dbReference>
<dbReference type="PIRSF" id="PIRSF002158">
    <property type="entry name" value="Ribosomal_L2"/>
    <property type="match status" value="1"/>
</dbReference>
<dbReference type="SMART" id="SM01383">
    <property type="entry name" value="Ribosomal_L2"/>
    <property type="match status" value="1"/>
</dbReference>
<dbReference type="SMART" id="SM01382">
    <property type="entry name" value="Ribosomal_L2_C"/>
    <property type="match status" value="1"/>
</dbReference>
<dbReference type="SUPFAM" id="SSF50249">
    <property type="entry name" value="Nucleic acid-binding proteins"/>
    <property type="match status" value="1"/>
</dbReference>
<dbReference type="SUPFAM" id="SSF50104">
    <property type="entry name" value="Translation proteins SH3-like domain"/>
    <property type="match status" value="1"/>
</dbReference>
<name>RL2_DEHMB</name>
<proteinExistence type="inferred from homology"/>
<sequence>MAIKIYRPTSPGRRHHSVSSFEEITKSRPERALLVSVKNDSGRNNQGRVTVRHRGGGSKTQIRVIDFKRNKLDVPGRVAAIEYDPNRTARIALVFYTDGEKRYILAPSDLKVGDVIMAGENAEPKSGNALPLSSIPTGTFIHNIEIIKGKGGIMVRSAGAAAQLMAKEDDYALVRLPSGEMRKVRSDCSATVGQIGNIEHGTLEIGKAGRNRHLGWRPTVRGSAMSPNNHPHGGGECRCPIGMTGPKTPWGKPALGYRTRKAKYSDKLIVKRRG</sequence>
<keyword id="KW-0687">Ribonucleoprotein</keyword>
<keyword id="KW-0689">Ribosomal protein</keyword>
<keyword id="KW-0694">RNA-binding</keyword>
<keyword id="KW-0699">rRNA-binding</keyword>
<reference key="1">
    <citation type="submission" date="2007-05" db="EMBL/GenBank/DDBJ databases">
        <title>Complete sequence of Dehalococcoides sp. BAV1.</title>
        <authorList>
            <consortium name="US DOE Joint Genome Institute"/>
            <person name="Copeland A."/>
            <person name="Lucas S."/>
            <person name="Lapidus A."/>
            <person name="Barry K."/>
            <person name="Detter J.C."/>
            <person name="Glavina del Rio T."/>
            <person name="Hammon N."/>
            <person name="Israni S."/>
            <person name="Pitluck S."/>
            <person name="Lowry S."/>
            <person name="Clum A."/>
            <person name="Schmutz J."/>
            <person name="Larimer F."/>
            <person name="Land M."/>
            <person name="Hauser L."/>
            <person name="Kyrpides N."/>
            <person name="Kim E."/>
            <person name="Ritalahti K.M."/>
            <person name="Loeffler F."/>
            <person name="Richardson P."/>
        </authorList>
    </citation>
    <scope>NUCLEOTIDE SEQUENCE [LARGE SCALE GENOMIC DNA]</scope>
    <source>
        <strain>ATCC BAA-2100 / JCM 16839 / KCTC 5957 / BAV1</strain>
    </source>
</reference>